<gene>
    <name evidence="1" type="primary">astD</name>
    <name type="ordered locus">plu3108</name>
</gene>
<protein>
    <recommendedName>
        <fullName evidence="1">N-succinylglutamate 5-semialdehyde dehydrogenase</fullName>
        <ecNumber evidence="1">1.2.1.71</ecNumber>
    </recommendedName>
    <alternativeName>
        <fullName evidence="1">Succinylglutamic semialdehyde dehydrogenase</fullName>
        <shortName evidence="1">SGSD</shortName>
    </alternativeName>
</protein>
<accession>Q7N2G9</accession>
<evidence type="ECO:0000255" key="1">
    <source>
        <dbReference type="HAMAP-Rule" id="MF_01174"/>
    </source>
</evidence>
<comment type="function">
    <text evidence="1">Catalyzes the NAD-dependent reduction of succinylglutamate semialdehyde into succinylglutamate.</text>
</comment>
<comment type="catalytic activity">
    <reaction evidence="1">
        <text>N-succinyl-L-glutamate 5-semialdehyde + NAD(+) + H2O = N-succinyl-L-glutamate + NADH + 2 H(+)</text>
        <dbReference type="Rhea" id="RHEA:10812"/>
        <dbReference type="ChEBI" id="CHEBI:15377"/>
        <dbReference type="ChEBI" id="CHEBI:15378"/>
        <dbReference type="ChEBI" id="CHEBI:57540"/>
        <dbReference type="ChEBI" id="CHEBI:57945"/>
        <dbReference type="ChEBI" id="CHEBI:58520"/>
        <dbReference type="ChEBI" id="CHEBI:58763"/>
        <dbReference type="EC" id="1.2.1.71"/>
    </reaction>
</comment>
<comment type="pathway">
    <text evidence="1">Amino-acid degradation; L-arginine degradation via AST pathway; L-glutamate and succinate from L-arginine: step 4/5.</text>
</comment>
<comment type="similarity">
    <text evidence="1">Belongs to the aldehyde dehydrogenase family. AstD subfamily.</text>
</comment>
<feature type="chain" id="PRO_0000262410" description="N-succinylglutamate 5-semialdehyde dehydrogenase">
    <location>
        <begin position="1"/>
        <end position="491"/>
    </location>
</feature>
<feature type="active site" evidence="1">
    <location>
        <position position="246"/>
    </location>
</feature>
<feature type="active site" evidence="1">
    <location>
        <position position="280"/>
    </location>
</feature>
<feature type="binding site" evidence="1">
    <location>
        <begin position="223"/>
        <end position="228"/>
    </location>
    <ligand>
        <name>NAD(+)</name>
        <dbReference type="ChEBI" id="CHEBI:57540"/>
    </ligand>
</feature>
<dbReference type="EC" id="1.2.1.71" evidence="1"/>
<dbReference type="EMBL" id="BX571869">
    <property type="protein sequence ID" value="CAE15482.1"/>
    <property type="molecule type" value="Genomic_DNA"/>
</dbReference>
<dbReference type="RefSeq" id="WP_011147324.1">
    <property type="nucleotide sequence ID" value="NC_005126.1"/>
</dbReference>
<dbReference type="SMR" id="Q7N2G9"/>
<dbReference type="STRING" id="243265.plu3108"/>
<dbReference type="GeneID" id="48849370"/>
<dbReference type="KEGG" id="plu:plu3108"/>
<dbReference type="eggNOG" id="COG1012">
    <property type="taxonomic scope" value="Bacteria"/>
</dbReference>
<dbReference type="HOGENOM" id="CLU_005391_1_0_6"/>
<dbReference type="OrthoDB" id="9812625at2"/>
<dbReference type="UniPathway" id="UPA00185">
    <property type="reaction ID" value="UER00282"/>
</dbReference>
<dbReference type="Proteomes" id="UP000002514">
    <property type="component" value="Chromosome"/>
</dbReference>
<dbReference type="GO" id="GO:0043824">
    <property type="term" value="F:succinylglutamate-semialdehyde dehydrogenase activity"/>
    <property type="evidence" value="ECO:0007669"/>
    <property type="project" value="UniProtKB-EC"/>
</dbReference>
<dbReference type="GO" id="GO:0019544">
    <property type="term" value="P:arginine catabolic process to glutamate"/>
    <property type="evidence" value="ECO:0007669"/>
    <property type="project" value="UniProtKB-UniRule"/>
</dbReference>
<dbReference type="GO" id="GO:0019545">
    <property type="term" value="P:arginine catabolic process to succinate"/>
    <property type="evidence" value="ECO:0007669"/>
    <property type="project" value="UniProtKB-UniRule"/>
</dbReference>
<dbReference type="CDD" id="cd07095">
    <property type="entry name" value="ALDH_SGSD_AstD"/>
    <property type="match status" value="1"/>
</dbReference>
<dbReference type="FunFam" id="3.40.605.10:FF:000010">
    <property type="entry name" value="N-succinylglutamate 5-semialdehyde dehydrogenase"/>
    <property type="match status" value="1"/>
</dbReference>
<dbReference type="Gene3D" id="3.40.605.10">
    <property type="entry name" value="Aldehyde Dehydrogenase, Chain A, domain 1"/>
    <property type="match status" value="1"/>
</dbReference>
<dbReference type="Gene3D" id="3.40.309.10">
    <property type="entry name" value="Aldehyde Dehydrogenase, Chain A, domain 2"/>
    <property type="match status" value="1"/>
</dbReference>
<dbReference type="HAMAP" id="MF_01174">
    <property type="entry name" value="Aldedh_AstD"/>
    <property type="match status" value="1"/>
</dbReference>
<dbReference type="InterPro" id="IPR016161">
    <property type="entry name" value="Ald_DH/histidinol_DH"/>
</dbReference>
<dbReference type="InterPro" id="IPR016163">
    <property type="entry name" value="Ald_DH_C"/>
</dbReference>
<dbReference type="InterPro" id="IPR016160">
    <property type="entry name" value="Ald_DH_CS_CYS"/>
</dbReference>
<dbReference type="InterPro" id="IPR029510">
    <property type="entry name" value="Ald_DH_CS_GLU"/>
</dbReference>
<dbReference type="InterPro" id="IPR016162">
    <property type="entry name" value="Ald_DH_N"/>
</dbReference>
<dbReference type="InterPro" id="IPR015590">
    <property type="entry name" value="Aldehyde_DH_dom"/>
</dbReference>
<dbReference type="InterPro" id="IPR050740">
    <property type="entry name" value="Aldehyde_DH_Superfamily"/>
</dbReference>
<dbReference type="InterPro" id="IPR017649">
    <property type="entry name" value="SuccinylGlu_semiald_DH_AstD"/>
</dbReference>
<dbReference type="NCBIfam" id="TIGR03240">
    <property type="entry name" value="arg_catab_astD"/>
    <property type="match status" value="1"/>
</dbReference>
<dbReference type="NCBIfam" id="NF006992">
    <property type="entry name" value="PRK09457.1"/>
    <property type="match status" value="1"/>
</dbReference>
<dbReference type="PANTHER" id="PTHR43353">
    <property type="entry name" value="SUCCINATE-SEMIALDEHYDE DEHYDROGENASE, MITOCHONDRIAL"/>
    <property type="match status" value="1"/>
</dbReference>
<dbReference type="PANTHER" id="PTHR43353:SF5">
    <property type="entry name" value="SUCCINATE-SEMIALDEHYDE DEHYDROGENASE, MITOCHONDRIAL"/>
    <property type="match status" value="1"/>
</dbReference>
<dbReference type="Pfam" id="PF00171">
    <property type="entry name" value="Aldedh"/>
    <property type="match status" value="1"/>
</dbReference>
<dbReference type="SUPFAM" id="SSF53720">
    <property type="entry name" value="ALDH-like"/>
    <property type="match status" value="1"/>
</dbReference>
<dbReference type="PROSITE" id="PS00070">
    <property type="entry name" value="ALDEHYDE_DEHYDR_CYS"/>
    <property type="match status" value="1"/>
</dbReference>
<dbReference type="PROSITE" id="PS00687">
    <property type="entry name" value="ALDEHYDE_DEHYDR_GLU"/>
    <property type="match status" value="1"/>
</dbReference>
<sequence length="491" mass="53316">MNYKAHYIGGRWIEGQGESITKFSPIDQQVLWQANSADASQVRAACHAAREAFYAWSHLPASERIKVIQTFAALLNEEKETLARVISQETSKPLWETRTEIQSMIGKAAISIEAWEQRTGESETIMPDGRALLRHRPHGVMAVFGPYNFPGHLPNGHIIPALIAGNTLVFKPSELTPMTAEETVKLWEKAGLPAGVLNLVQGARSTGTALLEDKQIDGVLFTGSANTGFHFHRMLGGQPEKMLALEMGGNNALIVDAYDDIDAAVYTIVQSAFISAGQRCTCARRLLVKNGAHGDAVIKRLVEVTERIVPSHWDAQPQPFIGGVISLQAVQNLLEAQDRLQKLGGISLVSLEQCQPQSTLLTPGIIDVSQVADVPDEEYFGPLLMLMRYDTFDEALAIANNTRFGLATGLISPDAALFQRLSEDARAGIVNWNKPLTGASSKAPFGGIGASGNYRPSAYYAADYCAWPMASLVADELTLPETLAPGLHFPD</sequence>
<name>ASTD_PHOLL</name>
<keyword id="KW-0056">Arginine metabolism</keyword>
<keyword id="KW-0520">NAD</keyword>
<keyword id="KW-0560">Oxidoreductase</keyword>
<keyword id="KW-1185">Reference proteome</keyword>
<organism>
    <name type="scientific">Photorhabdus laumondii subsp. laumondii (strain DSM 15139 / CIP 105565 / TT01)</name>
    <name type="common">Photorhabdus luminescens subsp. laumondii</name>
    <dbReference type="NCBI Taxonomy" id="243265"/>
    <lineage>
        <taxon>Bacteria</taxon>
        <taxon>Pseudomonadati</taxon>
        <taxon>Pseudomonadota</taxon>
        <taxon>Gammaproteobacteria</taxon>
        <taxon>Enterobacterales</taxon>
        <taxon>Morganellaceae</taxon>
        <taxon>Photorhabdus</taxon>
    </lineage>
</organism>
<proteinExistence type="inferred from homology"/>
<reference key="1">
    <citation type="journal article" date="2003" name="Nat. Biotechnol.">
        <title>The genome sequence of the entomopathogenic bacterium Photorhabdus luminescens.</title>
        <authorList>
            <person name="Duchaud E."/>
            <person name="Rusniok C."/>
            <person name="Frangeul L."/>
            <person name="Buchrieser C."/>
            <person name="Givaudan A."/>
            <person name="Taourit S."/>
            <person name="Bocs S."/>
            <person name="Boursaux-Eude C."/>
            <person name="Chandler M."/>
            <person name="Charles J.-F."/>
            <person name="Dassa E."/>
            <person name="Derose R."/>
            <person name="Derzelle S."/>
            <person name="Freyssinet G."/>
            <person name="Gaudriault S."/>
            <person name="Medigue C."/>
            <person name="Lanois A."/>
            <person name="Powell K."/>
            <person name="Siguier P."/>
            <person name="Vincent R."/>
            <person name="Wingate V."/>
            <person name="Zouine M."/>
            <person name="Glaser P."/>
            <person name="Boemare N."/>
            <person name="Danchin A."/>
            <person name="Kunst F."/>
        </authorList>
    </citation>
    <scope>NUCLEOTIDE SEQUENCE [LARGE SCALE GENOMIC DNA]</scope>
    <source>
        <strain>DSM 15139 / CIP 105565 / TT01</strain>
    </source>
</reference>